<protein>
    <recommendedName>
        <fullName evidence="1">Large ribosomal subunit protein uL18</fullName>
    </recommendedName>
    <alternativeName>
        <fullName evidence="2">50S ribosomal protein L18</fullName>
    </alternativeName>
</protein>
<reference key="1">
    <citation type="journal article" date="2010" name="J. Bacteriol.">
        <title>Whole genome sequences of two Xylella fastidiosa strains (M12 and M23) causing almond leaf scorch disease in California.</title>
        <authorList>
            <person name="Chen J."/>
            <person name="Xie G."/>
            <person name="Han S."/>
            <person name="Chertkov O."/>
            <person name="Sims D."/>
            <person name="Civerolo E.L."/>
        </authorList>
    </citation>
    <scope>NUCLEOTIDE SEQUENCE [LARGE SCALE GENOMIC DNA]</scope>
    <source>
        <strain>M12</strain>
    </source>
</reference>
<gene>
    <name evidence="1" type="primary">rplR</name>
    <name type="ordered locus">Xfasm12_0510</name>
</gene>
<sequence length="119" mass="12924">MSIGKNVARLRRAKSTRVHIRKLGVPRLSVLRTGRHLYAQIFTADGSKVIAAANTLQSQVKDGLKNGKNSLAATKVGKLIAERAKAVGVDRIAFDRSGYLYHGRIKILADAARDAGLKF</sequence>
<dbReference type="EMBL" id="CP000941">
    <property type="protein sequence ID" value="ACA11519.1"/>
    <property type="molecule type" value="Genomic_DNA"/>
</dbReference>
<dbReference type="RefSeq" id="WP_004086538.1">
    <property type="nucleotide sequence ID" value="NC_010513.1"/>
</dbReference>
<dbReference type="SMR" id="B0U5L5"/>
<dbReference type="KEGG" id="xfm:Xfasm12_0510"/>
<dbReference type="HOGENOM" id="CLU_098841_0_1_6"/>
<dbReference type="GO" id="GO:0022625">
    <property type="term" value="C:cytosolic large ribosomal subunit"/>
    <property type="evidence" value="ECO:0007669"/>
    <property type="project" value="TreeGrafter"/>
</dbReference>
<dbReference type="GO" id="GO:0008097">
    <property type="term" value="F:5S rRNA binding"/>
    <property type="evidence" value="ECO:0007669"/>
    <property type="project" value="TreeGrafter"/>
</dbReference>
<dbReference type="GO" id="GO:0003735">
    <property type="term" value="F:structural constituent of ribosome"/>
    <property type="evidence" value="ECO:0007669"/>
    <property type="project" value="InterPro"/>
</dbReference>
<dbReference type="GO" id="GO:0006412">
    <property type="term" value="P:translation"/>
    <property type="evidence" value="ECO:0007669"/>
    <property type="project" value="UniProtKB-UniRule"/>
</dbReference>
<dbReference type="CDD" id="cd00432">
    <property type="entry name" value="Ribosomal_L18_L5e"/>
    <property type="match status" value="1"/>
</dbReference>
<dbReference type="FunFam" id="3.30.420.100:FF:000001">
    <property type="entry name" value="50S ribosomal protein L18"/>
    <property type="match status" value="1"/>
</dbReference>
<dbReference type="Gene3D" id="3.30.420.100">
    <property type="match status" value="1"/>
</dbReference>
<dbReference type="HAMAP" id="MF_01337_B">
    <property type="entry name" value="Ribosomal_uL18_B"/>
    <property type="match status" value="1"/>
</dbReference>
<dbReference type="InterPro" id="IPR004389">
    <property type="entry name" value="Ribosomal_uL18_bac-type"/>
</dbReference>
<dbReference type="InterPro" id="IPR005484">
    <property type="entry name" value="Ribosomal_uL18_bac/euk"/>
</dbReference>
<dbReference type="NCBIfam" id="TIGR00060">
    <property type="entry name" value="L18_bact"/>
    <property type="match status" value="1"/>
</dbReference>
<dbReference type="PANTHER" id="PTHR12899">
    <property type="entry name" value="39S RIBOSOMAL PROTEIN L18, MITOCHONDRIAL"/>
    <property type="match status" value="1"/>
</dbReference>
<dbReference type="PANTHER" id="PTHR12899:SF3">
    <property type="entry name" value="LARGE RIBOSOMAL SUBUNIT PROTEIN UL18M"/>
    <property type="match status" value="1"/>
</dbReference>
<dbReference type="Pfam" id="PF00861">
    <property type="entry name" value="Ribosomal_L18p"/>
    <property type="match status" value="1"/>
</dbReference>
<dbReference type="SUPFAM" id="SSF53137">
    <property type="entry name" value="Translational machinery components"/>
    <property type="match status" value="1"/>
</dbReference>
<name>RL18_XYLFM</name>
<keyword id="KW-0687">Ribonucleoprotein</keyword>
<keyword id="KW-0689">Ribosomal protein</keyword>
<keyword id="KW-0694">RNA-binding</keyword>
<keyword id="KW-0699">rRNA-binding</keyword>
<evidence type="ECO:0000255" key="1">
    <source>
        <dbReference type="HAMAP-Rule" id="MF_01337"/>
    </source>
</evidence>
<evidence type="ECO:0000305" key="2"/>
<organism>
    <name type="scientific">Xylella fastidiosa (strain M12)</name>
    <dbReference type="NCBI Taxonomy" id="405440"/>
    <lineage>
        <taxon>Bacteria</taxon>
        <taxon>Pseudomonadati</taxon>
        <taxon>Pseudomonadota</taxon>
        <taxon>Gammaproteobacteria</taxon>
        <taxon>Lysobacterales</taxon>
        <taxon>Lysobacteraceae</taxon>
        <taxon>Xylella</taxon>
    </lineage>
</organism>
<feature type="chain" id="PRO_1000142743" description="Large ribosomal subunit protein uL18">
    <location>
        <begin position="1"/>
        <end position="119"/>
    </location>
</feature>
<accession>B0U5L5</accession>
<comment type="function">
    <text evidence="1">This is one of the proteins that bind and probably mediate the attachment of the 5S RNA into the large ribosomal subunit, where it forms part of the central protuberance.</text>
</comment>
<comment type="subunit">
    <text evidence="1">Part of the 50S ribosomal subunit; part of the 5S rRNA/L5/L18/L25 subcomplex. Contacts the 5S and 23S rRNAs.</text>
</comment>
<comment type="similarity">
    <text evidence="1">Belongs to the universal ribosomal protein uL18 family.</text>
</comment>
<proteinExistence type="inferred from homology"/>